<name>MOBA_RHILW</name>
<protein>
    <recommendedName>
        <fullName evidence="1">Molybdenum cofactor guanylyltransferase</fullName>
        <shortName evidence="1">MoCo guanylyltransferase</shortName>
        <ecNumber evidence="1">2.7.7.77</ecNumber>
    </recommendedName>
    <alternativeName>
        <fullName evidence="1">GTP:molybdopterin guanylyltransferase</fullName>
    </alternativeName>
    <alternativeName>
        <fullName evidence="1">Mo-MPT guanylyltransferase</fullName>
    </alternativeName>
    <alternativeName>
        <fullName evidence="1">Molybdopterin guanylyltransferase</fullName>
    </alternativeName>
    <alternativeName>
        <fullName evidence="1">Molybdopterin-guanine dinucleotide synthase</fullName>
        <shortName evidence="1">MGD synthase</shortName>
    </alternativeName>
</protein>
<feature type="chain" id="PRO_1000132962" description="Molybdenum cofactor guanylyltransferase">
    <location>
        <begin position="1"/>
        <end position="209"/>
    </location>
</feature>
<feature type="binding site" evidence="1">
    <location>
        <begin position="16"/>
        <end position="18"/>
    </location>
    <ligand>
        <name>GTP</name>
        <dbReference type="ChEBI" id="CHEBI:37565"/>
    </ligand>
</feature>
<feature type="binding site" evidence="1">
    <location>
        <position position="28"/>
    </location>
    <ligand>
        <name>GTP</name>
        <dbReference type="ChEBI" id="CHEBI:37565"/>
    </ligand>
</feature>
<feature type="binding site" evidence="1">
    <location>
        <position position="56"/>
    </location>
    <ligand>
        <name>GTP</name>
        <dbReference type="ChEBI" id="CHEBI:37565"/>
    </ligand>
</feature>
<feature type="binding site" evidence="1">
    <location>
        <position position="69"/>
    </location>
    <ligand>
        <name>GTP</name>
        <dbReference type="ChEBI" id="CHEBI:37565"/>
    </ligand>
</feature>
<feature type="binding site" evidence="1">
    <location>
        <position position="103"/>
    </location>
    <ligand>
        <name>GTP</name>
        <dbReference type="ChEBI" id="CHEBI:37565"/>
    </ligand>
</feature>
<feature type="binding site" evidence="1">
    <location>
        <position position="103"/>
    </location>
    <ligand>
        <name>Mg(2+)</name>
        <dbReference type="ChEBI" id="CHEBI:18420"/>
    </ligand>
</feature>
<comment type="function">
    <text evidence="1">Transfers a GMP moiety from GTP to Mo-molybdopterin (Mo-MPT) cofactor (Moco or molybdenum cofactor) to form Mo-molybdopterin guanine dinucleotide (Mo-MGD) cofactor.</text>
</comment>
<comment type="catalytic activity">
    <reaction evidence="1">
        <text>Mo-molybdopterin + GTP + H(+) = Mo-molybdopterin guanine dinucleotide + diphosphate</text>
        <dbReference type="Rhea" id="RHEA:34243"/>
        <dbReference type="ChEBI" id="CHEBI:15378"/>
        <dbReference type="ChEBI" id="CHEBI:33019"/>
        <dbReference type="ChEBI" id="CHEBI:37565"/>
        <dbReference type="ChEBI" id="CHEBI:71302"/>
        <dbReference type="ChEBI" id="CHEBI:71310"/>
        <dbReference type="EC" id="2.7.7.77"/>
    </reaction>
</comment>
<comment type="cofactor">
    <cofactor evidence="1">
        <name>Mg(2+)</name>
        <dbReference type="ChEBI" id="CHEBI:18420"/>
    </cofactor>
</comment>
<comment type="subunit">
    <text evidence="1">Monomer.</text>
</comment>
<comment type="subcellular location">
    <subcellularLocation>
        <location evidence="1">Cytoplasm</location>
    </subcellularLocation>
</comment>
<comment type="domain">
    <text evidence="1">The N-terminal domain determines nucleotide recognition and specific binding, while the C-terminal domain determines the specific binding to the target protein.</text>
</comment>
<comment type="similarity">
    <text evidence="1">Belongs to the MobA family.</text>
</comment>
<dbReference type="EC" id="2.7.7.77" evidence="1"/>
<dbReference type="EMBL" id="CP001191">
    <property type="protein sequence ID" value="ACI55325.1"/>
    <property type="molecule type" value="Genomic_DNA"/>
</dbReference>
<dbReference type="RefSeq" id="WP_012557896.1">
    <property type="nucleotide sequence ID" value="NC_011369.1"/>
</dbReference>
<dbReference type="SMR" id="B5ZS84"/>
<dbReference type="STRING" id="395492.Rleg2_2041"/>
<dbReference type="KEGG" id="rlt:Rleg2_2041"/>
<dbReference type="eggNOG" id="COG0746">
    <property type="taxonomic scope" value="Bacteria"/>
</dbReference>
<dbReference type="HOGENOM" id="CLU_055597_5_0_5"/>
<dbReference type="Proteomes" id="UP000008330">
    <property type="component" value="Chromosome"/>
</dbReference>
<dbReference type="GO" id="GO:0005737">
    <property type="term" value="C:cytoplasm"/>
    <property type="evidence" value="ECO:0007669"/>
    <property type="project" value="UniProtKB-SubCell"/>
</dbReference>
<dbReference type="GO" id="GO:0005525">
    <property type="term" value="F:GTP binding"/>
    <property type="evidence" value="ECO:0007669"/>
    <property type="project" value="UniProtKB-UniRule"/>
</dbReference>
<dbReference type="GO" id="GO:0046872">
    <property type="term" value="F:metal ion binding"/>
    <property type="evidence" value="ECO:0007669"/>
    <property type="project" value="UniProtKB-KW"/>
</dbReference>
<dbReference type="GO" id="GO:0061603">
    <property type="term" value="F:molybdenum cofactor guanylyltransferase activity"/>
    <property type="evidence" value="ECO:0007669"/>
    <property type="project" value="UniProtKB-EC"/>
</dbReference>
<dbReference type="GO" id="GO:1902758">
    <property type="term" value="P:bis(molybdopterin guanine dinucleotide)molybdenum biosynthetic process"/>
    <property type="evidence" value="ECO:0007669"/>
    <property type="project" value="TreeGrafter"/>
</dbReference>
<dbReference type="CDD" id="cd02503">
    <property type="entry name" value="MobA"/>
    <property type="match status" value="1"/>
</dbReference>
<dbReference type="Gene3D" id="3.90.550.10">
    <property type="entry name" value="Spore Coat Polysaccharide Biosynthesis Protein SpsA, Chain A"/>
    <property type="match status" value="1"/>
</dbReference>
<dbReference type="HAMAP" id="MF_00316">
    <property type="entry name" value="MobA"/>
    <property type="match status" value="1"/>
</dbReference>
<dbReference type="InterPro" id="IPR025877">
    <property type="entry name" value="MobA-like_NTP_Trfase"/>
</dbReference>
<dbReference type="InterPro" id="IPR013482">
    <property type="entry name" value="Molybde_CF_guanTrfase"/>
</dbReference>
<dbReference type="InterPro" id="IPR029044">
    <property type="entry name" value="Nucleotide-diphossugar_trans"/>
</dbReference>
<dbReference type="NCBIfam" id="TIGR02665">
    <property type="entry name" value="molyb_mobA"/>
    <property type="match status" value="1"/>
</dbReference>
<dbReference type="PANTHER" id="PTHR19136">
    <property type="entry name" value="MOLYBDENUM COFACTOR GUANYLYLTRANSFERASE"/>
    <property type="match status" value="1"/>
</dbReference>
<dbReference type="PANTHER" id="PTHR19136:SF81">
    <property type="entry name" value="MOLYBDENUM COFACTOR GUANYLYLTRANSFERASE"/>
    <property type="match status" value="1"/>
</dbReference>
<dbReference type="Pfam" id="PF12804">
    <property type="entry name" value="NTP_transf_3"/>
    <property type="match status" value="1"/>
</dbReference>
<dbReference type="SUPFAM" id="SSF53448">
    <property type="entry name" value="Nucleotide-diphospho-sugar transferases"/>
    <property type="match status" value="1"/>
</dbReference>
<gene>
    <name evidence="1" type="primary">mobA</name>
    <name type="ordered locus">Rleg2_2041</name>
</gene>
<proteinExistence type="inferred from homology"/>
<evidence type="ECO:0000255" key="1">
    <source>
        <dbReference type="HAMAP-Rule" id="MF_00316"/>
    </source>
</evidence>
<accession>B5ZS84</accession>
<sequence length="209" mass="22579">MTEFSIGRSEIAGVVLAGGRSQRMGRDKAGAMLGAESLLRHVLTRLSQQVLPVAVNADAAAEDVPVIPDRFRGKAGPLAGIHAAMVYAAGLPGITHVVTVSVDCPFFPADLVARLAAALERQSQIAIAASEGRSHPVFGLWPVTLAADLEAWMVTDEKRRVRDFLLRHDVTEVTFPLHPTRASLLDPFFNINTPDDLAEAERWLEALRA</sequence>
<reference key="1">
    <citation type="journal article" date="2010" name="Stand. Genomic Sci.">
        <title>Complete genome sequence of Rhizobium leguminosarum bv trifolii strain WSM2304, an effective microsymbiont of the South American clover Trifolium polymorphum.</title>
        <authorList>
            <person name="Reeve W."/>
            <person name="O'Hara G."/>
            <person name="Chain P."/>
            <person name="Ardley J."/>
            <person name="Brau L."/>
            <person name="Nandesena K."/>
            <person name="Tiwari R."/>
            <person name="Malfatti S."/>
            <person name="Kiss H."/>
            <person name="Lapidus A."/>
            <person name="Copeland A."/>
            <person name="Nolan M."/>
            <person name="Land M."/>
            <person name="Ivanova N."/>
            <person name="Mavromatis K."/>
            <person name="Markowitz V."/>
            <person name="Kyrpides N."/>
            <person name="Melino V."/>
            <person name="Denton M."/>
            <person name="Yates R."/>
            <person name="Howieson J."/>
        </authorList>
    </citation>
    <scope>NUCLEOTIDE SEQUENCE [LARGE SCALE GENOMIC DNA]</scope>
    <source>
        <strain>WSM2304</strain>
    </source>
</reference>
<organism>
    <name type="scientific">Rhizobium leguminosarum bv. trifolii (strain WSM2304)</name>
    <dbReference type="NCBI Taxonomy" id="395492"/>
    <lineage>
        <taxon>Bacteria</taxon>
        <taxon>Pseudomonadati</taxon>
        <taxon>Pseudomonadota</taxon>
        <taxon>Alphaproteobacteria</taxon>
        <taxon>Hyphomicrobiales</taxon>
        <taxon>Rhizobiaceae</taxon>
        <taxon>Rhizobium/Agrobacterium group</taxon>
        <taxon>Rhizobium</taxon>
    </lineage>
</organism>
<keyword id="KW-0963">Cytoplasm</keyword>
<keyword id="KW-0342">GTP-binding</keyword>
<keyword id="KW-0460">Magnesium</keyword>
<keyword id="KW-0479">Metal-binding</keyword>
<keyword id="KW-0501">Molybdenum cofactor biosynthesis</keyword>
<keyword id="KW-0547">Nucleotide-binding</keyword>
<keyword id="KW-1185">Reference proteome</keyword>
<keyword id="KW-0808">Transferase</keyword>